<accession>Q9VHQ7</accession>
<dbReference type="EMBL" id="AE014297">
    <property type="protein sequence ID" value="AAF54244.2"/>
    <property type="molecule type" value="Genomic_DNA"/>
</dbReference>
<dbReference type="RefSeq" id="NP_524279.2">
    <property type="nucleotide sequence ID" value="NM_079555.2"/>
</dbReference>
<dbReference type="SMR" id="Q9VHQ7"/>
<dbReference type="FunCoup" id="Q9VHQ7">
    <property type="interactions" value="68"/>
</dbReference>
<dbReference type="IntAct" id="Q9VHQ7">
    <property type="interactions" value="3"/>
</dbReference>
<dbReference type="STRING" id="7227.FBpp0081383"/>
<dbReference type="GlyCosmos" id="Q9VHQ7">
    <property type="glycosylation" value="1 site, No reported glycans"/>
</dbReference>
<dbReference type="GlyGen" id="Q9VHQ7">
    <property type="glycosylation" value="1 site"/>
</dbReference>
<dbReference type="PaxDb" id="7227-FBpp0081383"/>
<dbReference type="EnsemblMetazoa" id="FBtr0081900">
    <property type="protein sequence ID" value="FBpp0081383"/>
    <property type="gene ID" value="FBgn0037590"/>
</dbReference>
<dbReference type="GeneID" id="41007"/>
<dbReference type="KEGG" id="dme:Dmel_CG11735"/>
<dbReference type="AGR" id="FB:FBgn0037590"/>
<dbReference type="CTD" id="41007"/>
<dbReference type="FlyBase" id="FBgn0037590">
    <property type="gene designation" value="Or85b"/>
</dbReference>
<dbReference type="VEuPathDB" id="VectorBase:FBgn0037590"/>
<dbReference type="eggNOG" id="ENOG502SR0T">
    <property type="taxonomic scope" value="Eukaryota"/>
</dbReference>
<dbReference type="GeneTree" id="ENSGT00560000077544"/>
<dbReference type="HOGENOM" id="CLU_033399_0_0_1"/>
<dbReference type="InParanoid" id="Q9VHQ7"/>
<dbReference type="OMA" id="LRTMYTQ"/>
<dbReference type="OrthoDB" id="8185860at2759"/>
<dbReference type="PhylomeDB" id="Q9VHQ7"/>
<dbReference type="BioGRID-ORCS" id="41007">
    <property type="hits" value="0 hits in 1 CRISPR screen"/>
</dbReference>
<dbReference type="GenomeRNAi" id="41007"/>
<dbReference type="PRO" id="PR:Q9VHQ7"/>
<dbReference type="Proteomes" id="UP000000803">
    <property type="component" value="Chromosome 3R"/>
</dbReference>
<dbReference type="Bgee" id="FBgn0037590">
    <property type="expression patterns" value="Expressed in antennal basiconic sensillum ab3 (Drosophila) and 3 other cell types or tissues"/>
</dbReference>
<dbReference type="ExpressionAtlas" id="Q9VHQ7">
    <property type="expression patterns" value="baseline and differential"/>
</dbReference>
<dbReference type="GO" id="GO:0034703">
    <property type="term" value="C:cation channel complex"/>
    <property type="evidence" value="ECO:0000314"/>
    <property type="project" value="FlyBase"/>
</dbReference>
<dbReference type="GO" id="GO:0032590">
    <property type="term" value="C:dendrite membrane"/>
    <property type="evidence" value="ECO:0000250"/>
    <property type="project" value="FlyBase"/>
</dbReference>
<dbReference type="GO" id="GO:0005886">
    <property type="term" value="C:plasma membrane"/>
    <property type="evidence" value="ECO:0000314"/>
    <property type="project" value="FlyBase"/>
</dbReference>
<dbReference type="GO" id="GO:0170020">
    <property type="term" value="F:ionotropic olfactory receptor activity"/>
    <property type="evidence" value="ECO:0000314"/>
    <property type="project" value="FlyBase"/>
</dbReference>
<dbReference type="GO" id="GO:0005549">
    <property type="term" value="F:odorant binding"/>
    <property type="evidence" value="ECO:0000315"/>
    <property type="project" value="FlyBase"/>
</dbReference>
<dbReference type="GO" id="GO:0004984">
    <property type="term" value="F:olfactory receptor activity"/>
    <property type="evidence" value="ECO:0000318"/>
    <property type="project" value="GO_Central"/>
</dbReference>
<dbReference type="GO" id="GO:0050911">
    <property type="term" value="P:detection of chemical stimulus involved in sensory perception of smell"/>
    <property type="evidence" value="ECO:0000314"/>
    <property type="project" value="FlyBase"/>
</dbReference>
<dbReference type="GO" id="GO:0007165">
    <property type="term" value="P:signal transduction"/>
    <property type="evidence" value="ECO:0007669"/>
    <property type="project" value="UniProtKB-KW"/>
</dbReference>
<dbReference type="InterPro" id="IPR004117">
    <property type="entry name" value="7tm6_olfct_rcpt"/>
</dbReference>
<dbReference type="PANTHER" id="PTHR21137">
    <property type="entry name" value="ODORANT RECEPTOR"/>
    <property type="match status" value="1"/>
</dbReference>
<dbReference type="PANTHER" id="PTHR21137:SF44">
    <property type="entry name" value="ODORANT RECEPTOR 13A-RELATED"/>
    <property type="match status" value="1"/>
</dbReference>
<dbReference type="Pfam" id="PF02949">
    <property type="entry name" value="7tm_6"/>
    <property type="match status" value="1"/>
</dbReference>
<sequence>MEKLMKYASFFYTAVGIRPYTNGEESKMNKLIFHIVFWSNVINLSFVGLFESIYVYSAFMDNKFLEAVTALSYIGFVTVGMSKMFFIRWKKTAITELINELKEIYPNGLIREERYNLPMYLGTCSRISLIYSLLYSVLIWTFNLFCVMEYWVYDKWLNIRVVGKQLPYLMYIPWKWQDNWSYYPLLFSQNFAGYTSAAGQISTDVLLCAVATQLVMHFDFLSNSMERHELSGDWKKDSRFLVDIVRYHERILRLSDAVNDIFGIPLLLNFMVSSFVICFVGFQMTVGVPPDIVVKLFLFLVSSMSQVYLICHYGQLVADASYGFSVATYNQKWYKADVRYKRALVIIIARSQKVTFLKATIFLDITRSTMTDLLQISYKFFALLRTMYTQ</sequence>
<keyword id="KW-1003">Cell membrane</keyword>
<keyword id="KW-0325">Glycoprotein</keyword>
<keyword id="KW-0472">Membrane</keyword>
<keyword id="KW-0552">Olfaction</keyword>
<keyword id="KW-0675">Receptor</keyword>
<keyword id="KW-1185">Reference proteome</keyword>
<keyword id="KW-0716">Sensory transduction</keyword>
<keyword id="KW-0807">Transducer</keyword>
<keyword id="KW-0812">Transmembrane</keyword>
<keyword id="KW-1133">Transmembrane helix</keyword>
<protein>
    <recommendedName>
        <fullName>Odorant receptor 85b</fullName>
    </recommendedName>
</protein>
<name>OR85B_DROME</name>
<reference key="1">
    <citation type="journal article" date="2000" name="Science">
        <title>The genome sequence of Drosophila melanogaster.</title>
        <authorList>
            <person name="Adams M.D."/>
            <person name="Celniker S.E."/>
            <person name="Holt R.A."/>
            <person name="Evans C.A."/>
            <person name="Gocayne J.D."/>
            <person name="Amanatides P.G."/>
            <person name="Scherer S.E."/>
            <person name="Li P.W."/>
            <person name="Hoskins R.A."/>
            <person name="Galle R.F."/>
            <person name="George R.A."/>
            <person name="Lewis S.E."/>
            <person name="Richards S."/>
            <person name="Ashburner M."/>
            <person name="Henderson S.N."/>
            <person name="Sutton G.G."/>
            <person name="Wortman J.R."/>
            <person name="Yandell M.D."/>
            <person name="Zhang Q."/>
            <person name="Chen L.X."/>
            <person name="Brandon R.C."/>
            <person name="Rogers Y.-H.C."/>
            <person name="Blazej R.G."/>
            <person name="Champe M."/>
            <person name="Pfeiffer B.D."/>
            <person name="Wan K.H."/>
            <person name="Doyle C."/>
            <person name="Baxter E.G."/>
            <person name="Helt G."/>
            <person name="Nelson C.R."/>
            <person name="Miklos G.L.G."/>
            <person name="Abril J.F."/>
            <person name="Agbayani A."/>
            <person name="An H.-J."/>
            <person name="Andrews-Pfannkoch C."/>
            <person name="Baldwin D."/>
            <person name="Ballew R.M."/>
            <person name="Basu A."/>
            <person name="Baxendale J."/>
            <person name="Bayraktaroglu L."/>
            <person name="Beasley E.M."/>
            <person name="Beeson K.Y."/>
            <person name="Benos P.V."/>
            <person name="Berman B.P."/>
            <person name="Bhandari D."/>
            <person name="Bolshakov S."/>
            <person name="Borkova D."/>
            <person name="Botchan M.R."/>
            <person name="Bouck J."/>
            <person name="Brokstein P."/>
            <person name="Brottier P."/>
            <person name="Burtis K.C."/>
            <person name="Busam D.A."/>
            <person name="Butler H."/>
            <person name="Cadieu E."/>
            <person name="Center A."/>
            <person name="Chandra I."/>
            <person name="Cherry J.M."/>
            <person name="Cawley S."/>
            <person name="Dahlke C."/>
            <person name="Davenport L.B."/>
            <person name="Davies P."/>
            <person name="de Pablos B."/>
            <person name="Delcher A."/>
            <person name="Deng Z."/>
            <person name="Mays A.D."/>
            <person name="Dew I."/>
            <person name="Dietz S.M."/>
            <person name="Dodson K."/>
            <person name="Doup L.E."/>
            <person name="Downes M."/>
            <person name="Dugan-Rocha S."/>
            <person name="Dunkov B.C."/>
            <person name="Dunn P."/>
            <person name="Durbin K.J."/>
            <person name="Evangelista C.C."/>
            <person name="Ferraz C."/>
            <person name="Ferriera S."/>
            <person name="Fleischmann W."/>
            <person name="Fosler C."/>
            <person name="Gabrielian A.E."/>
            <person name="Garg N.S."/>
            <person name="Gelbart W.M."/>
            <person name="Glasser K."/>
            <person name="Glodek A."/>
            <person name="Gong F."/>
            <person name="Gorrell J.H."/>
            <person name="Gu Z."/>
            <person name="Guan P."/>
            <person name="Harris M."/>
            <person name="Harris N.L."/>
            <person name="Harvey D.A."/>
            <person name="Heiman T.J."/>
            <person name="Hernandez J.R."/>
            <person name="Houck J."/>
            <person name="Hostin D."/>
            <person name="Houston K.A."/>
            <person name="Howland T.J."/>
            <person name="Wei M.-H."/>
            <person name="Ibegwam C."/>
            <person name="Jalali M."/>
            <person name="Kalush F."/>
            <person name="Karpen G.H."/>
            <person name="Ke Z."/>
            <person name="Kennison J.A."/>
            <person name="Ketchum K.A."/>
            <person name="Kimmel B.E."/>
            <person name="Kodira C.D."/>
            <person name="Kraft C.L."/>
            <person name="Kravitz S."/>
            <person name="Kulp D."/>
            <person name="Lai Z."/>
            <person name="Lasko P."/>
            <person name="Lei Y."/>
            <person name="Levitsky A.A."/>
            <person name="Li J.H."/>
            <person name="Li Z."/>
            <person name="Liang Y."/>
            <person name="Lin X."/>
            <person name="Liu X."/>
            <person name="Mattei B."/>
            <person name="McIntosh T.C."/>
            <person name="McLeod M.P."/>
            <person name="McPherson D."/>
            <person name="Merkulov G."/>
            <person name="Milshina N.V."/>
            <person name="Mobarry C."/>
            <person name="Morris J."/>
            <person name="Moshrefi A."/>
            <person name="Mount S.M."/>
            <person name="Moy M."/>
            <person name="Murphy B."/>
            <person name="Murphy L."/>
            <person name="Muzny D.M."/>
            <person name="Nelson D.L."/>
            <person name="Nelson D.R."/>
            <person name="Nelson K.A."/>
            <person name="Nixon K."/>
            <person name="Nusskern D.R."/>
            <person name="Pacleb J.M."/>
            <person name="Palazzolo M."/>
            <person name="Pittman G.S."/>
            <person name="Pan S."/>
            <person name="Pollard J."/>
            <person name="Puri V."/>
            <person name="Reese M.G."/>
            <person name="Reinert K."/>
            <person name="Remington K."/>
            <person name="Saunders R.D.C."/>
            <person name="Scheeler F."/>
            <person name="Shen H."/>
            <person name="Shue B.C."/>
            <person name="Siden-Kiamos I."/>
            <person name="Simpson M."/>
            <person name="Skupski M.P."/>
            <person name="Smith T.J."/>
            <person name="Spier E."/>
            <person name="Spradling A.C."/>
            <person name="Stapleton M."/>
            <person name="Strong R."/>
            <person name="Sun E."/>
            <person name="Svirskas R."/>
            <person name="Tector C."/>
            <person name="Turner R."/>
            <person name="Venter E."/>
            <person name="Wang A.H."/>
            <person name="Wang X."/>
            <person name="Wang Z.-Y."/>
            <person name="Wassarman D.A."/>
            <person name="Weinstock G.M."/>
            <person name="Weissenbach J."/>
            <person name="Williams S.M."/>
            <person name="Woodage T."/>
            <person name="Worley K.C."/>
            <person name="Wu D."/>
            <person name="Yang S."/>
            <person name="Yao Q.A."/>
            <person name="Ye J."/>
            <person name="Yeh R.-F."/>
            <person name="Zaveri J.S."/>
            <person name="Zhan M."/>
            <person name="Zhang G."/>
            <person name="Zhao Q."/>
            <person name="Zheng L."/>
            <person name="Zheng X.H."/>
            <person name="Zhong F.N."/>
            <person name="Zhong W."/>
            <person name="Zhou X."/>
            <person name="Zhu S.C."/>
            <person name="Zhu X."/>
            <person name="Smith H.O."/>
            <person name="Gibbs R.A."/>
            <person name="Myers E.W."/>
            <person name="Rubin G.M."/>
            <person name="Venter J.C."/>
        </authorList>
    </citation>
    <scope>NUCLEOTIDE SEQUENCE [LARGE SCALE GENOMIC DNA]</scope>
    <source>
        <strain>Berkeley</strain>
    </source>
</reference>
<reference key="2">
    <citation type="journal article" date="2002" name="Genome Biol.">
        <title>Annotation of the Drosophila melanogaster euchromatic genome: a systematic review.</title>
        <authorList>
            <person name="Misra S."/>
            <person name="Crosby M.A."/>
            <person name="Mungall C.J."/>
            <person name="Matthews B.B."/>
            <person name="Campbell K.S."/>
            <person name="Hradecky P."/>
            <person name="Huang Y."/>
            <person name="Kaminker J.S."/>
            <person name="Millburn G.H."/>
            <person name="Prochnik S.E."/>
            <person name="Smith C.D."/>
            <person name="Tupy J.L."/>
            <person name="Whitfield E.J."/>
            <person name="Bayraktaroglu L."/>
            <person name="Berman B.P."/>
            <person name="Bettencourt B.R."/>
            <person name="Celniker S.E."/>
            <person name="de Grey A.D.N.J."/>
            <person name="Drysdale R.A."/>
            <person name="Harris N.L."/>
            <person name="Richter J."/>
            <person name="Russo S."/>
            <person name="Schroeder A.J."/>
            <person name="Shu S.Q."/>
            <person name="Stapleton M."/>
            <person name="Yamada C."/>
            <person name="Ashburner M."/>
            <person name="Gelbart W.M."/>
            <person name="Rubin G.M."/>
            <person name="Lewis S.E."/>
        </authorList>
    </citation>
    <scope>GENOME REANNOTATION</scope>
    <source>
        <strain>Berkeley</strain>
    </source>
</reference>
<reference key="3">
    <citation type="journal article" date="2000" name="Cell">
        <title>An olfactory sensory map in the fly brain.</title>
        <authorList>
            <person name="Vosshall L.B."/>
            <person name="Wong A.M."/>
            <person name="Axel R."/>
        </authorList>
    </citation>
    <scope>TISSUE SPECIFICITY</scope>
</reference>
<reference key="4">
    <citation type="journal article" date="2006" name="Cell">
        <title>Coding of odors by a receptor repertoire.</title>
        <authorList>
            <person name="Hallem E.A."/>
            <person name="Carlson J.R."/>
        </authorList>
    </citation>
    <scope>FUNCTION</scope>
</reference>
<reference key="5">
    <citation type="journal article" date="2010" name="J. Biol. Chem.">
        <title>Transmembrane segment 3 of Drosophila melanogaster odorant receptor subunit 85b contributes to ligand-receptor interactions.</title>
        <authorList>
            <person name="Nichols A.S."/>
            <person name="Luetje C.W."/>
        </authorList>
    </citation>
    <scope>INTERACTION WITH ORCO</scope>
    <scope>FUNCTION</scope>
    <scope>DOMAIN</scope>
    <scope>MUTAGENESIS OF PHE-142; ASN-143; CYS-208 AND CYS-278</scope>
</reference>
<feature type="chain" id="PRO_0000174275" description="Odorant receptor 85b">
    <location>
        <begin position="1"/>
        <end position="390"/>
    </location>
</feature>
<feature type="topological domain" description="Cytoplasmic" evidence="2">
    <location>
        <begin position="1"/>
        <end position="30"/>
    </location>
</feature>
<feature type="transmembrane region" description="Helical; Name=1" evidence="2">
    <location>
        <begin position="31"/>
        <end position="51"/>
    </location>
</feature>
<feature type="topological domain" description="Extracellular" evidence="2">
    <location>
        <begin position="52"/>
        <end position="66"/>
    </location>
</feature>
<feature type="transmembrane region" description="Helical; Name=2" evidence="2">
    <location>
        <begin position="67"/>
        <end position="87"/>
    </location>
</feature>
<feature type="topological domain" description="Cytoplasmic" evidence="2">
    <location>
        <begin position="88"/>
        <end position="126"/>
    </location>
</feature>
<feature type="transmembrane region" description="Helical; Name=3" evidence="2">
    <location>
        <begin position="127"/>
        <end position="147"/>
    </location>
</feature>
<feature type="topological domain" description="Extracellular" evidence="2">
    <location>
        <begin position="148"/>
        <end position="200"/>
    </location>
</feature>
<feature type="transmembrane region" description="Helical; Name=4" evidence="2">
    <location>
        <begin position="201"/>
        <end position="221"/>
    </location>
</feature>
<feature type="topological domain" description="Cytoplasmic" evidence="2">
    <location>
        <begin position="222"/>
        <end position="260"/>
    </location>
</feature>
<feature type="transmembrane region" description="Helical; Name=5" evidence="2">
    <location>
        <begin position="261"/>
        <end position="281"/>
    </location>
</feature>
<feature type="topological domain" description="Extracellular" evidence="2">
    <location>
        <begin position="282"/>
        <end position="291"/>
    </location>
</feature>
<feature type="transmembrane region" description="Helical; Name=6" evidence="2">
    <location>
        <begin position="292"/>
        <end position="312"/>
    </location>
</feature>
<feature type="topological domain" description="Cytoplasmic" evidence="2">
    <location>
        <begin position="313"/>
        <end position="360"/>
    </location>
</feature>
<feature type="transmembrane region" description="Helical; Name=7" evidence="2">
    <location>
        <begin position="361"/>
        <end position="381"/>
    </location>
</feature>
<feature type="topological domain" description="Extracellular" evidence="2">
    <location>
        <begin position="382"/>
        <end position="390"/>
    </location>
</feature>
<feature type="glycosylation site" description="N-linked (GlcNAc...) asparagine" evidence="2">
    <location>
        <position position="179"/>
    </location>
</feature>
<feature type="mutagenesis site" description="Leads to altered odorant preference." evidence="5">
    <original>F</original>
    <variation>C</variation>
    <location>
        <position position="142"/>
    </location>
</feature>
<feature type="mutagenesis site" description="Leads to altered odorant preference." evidence="5">
    <original>N</original>
    <variation>C</variation>
    <location>
        <position position="143"/>
    </location>
</feature>
<feature type="mutagenesis site" description="Increases odorant sensitivity." evidence="5">
    <original>C</original>
    <variation>S</variation>
    <location>
        <position position="208"/>
    </location>
</feature>
<feature type="mutagenesis site" description="Increases odorant sensitivity." evidence="5">
    <original>C</original>
    <variation>S</variation>
    <location>
        <position position="278"/>
    </location>
</feature>
<proteinExistence type="evidence at protein level"/>
<organism>
    <name type="scientific">Drosophila melanogaster</name>
    <name type="common">Fruit fly</name>
    <dbReference type="NCBI Taxonomy" id="7227"/>
    <lineage>
        <taxon>Eukaryota</taxon>
        <taxon>Metazoa</taxon>
        <taxon>Ecdysozoa</taxon>
        <taxon>Arthropoda</taxon>
        <taxon>Hexapoda</taxon>
        <taxon>Insecta</taxon>
        <taxon>Pterygota</taxon>
        <taxon>Neoptera</taxon>
        <taxon>Endopterygota</taxon>
        <taxon>Diptera</taxon>
        <taxon>Brachycera</taxon>
        <taxon>Muscomorpha</taxon>
        <taxon>Ephydroidea</taxon>
        <taxon>Drosophilidae</taxon>
        <taxon>Drosophila</taxon>
        <taxon>Sophophora</taxon>
    </lineage>
</organism>
<gene>
    <name type="primary">Or85b</name>
    <name type="ORF">CG11735</name>
</gene>
<evidence type="ECO:0000250" key="1"/>
<evidence type="ECO:0000255" key="2"/>
<evidence type="ECO:0000269" key="3">
    <source>
    </source>
</evidence>
<evidence type="ECO:0000269" key="4">
    <source>
    </source>
</evidence>
<evidence type="ECO:0000269" key="5">
    <source>
    </source>
</evidence>
<evidence type="ECO:0000305" key="6"/>
<comment type="function">
    <text evidence="4 5">Odorant receptor which mediates acceptance or avoidance behavior, depending on its substrates. The odorant receptor repertoire encodes a large collection of odor stimuli that vary widely in identity, intensity, and duration. Forms a complex with Orco to form odorant-sensing units, providing sensitive and prolonged odorant signaling and calcium permeability. Involved in the behavioral responses to 2-heptanone, amyl acetate, and butyl acetate.</text>
</comment>
<comment type="subunit">
    <text evidence="5">Interacts with Orco. Complexes exist early in the endomembrane system in olfactory sensory neurons (OSNs), coupling these complexes to the conserved ciliary trafficking pathway.</text>
</comment>
<comment type="subcellular location">
    <subcellularLocation>
        <location evidence="1">Cell membrane</location>
        <topology evidence="1">Multi-pass membrane protein</topology>
    </subcellularLocation>
</comment>
<comment type="tissue specificity">
    <text evidence="3">Expressed in olfactory sensory neurons in the antenna.</text>
</comment>
<comment type="domain">
    <text evidence="5">Residues 146 to 150 play a role in odorant (2-heptanone) activation.</text>
</comment>
<comment type="miscellaneous">
    <text>The atypical heteromeric and topological design of the odorant receptors appears to be an insect-specific solution for odor recognition, making the OR/Orco complex an attractive target for the development of highly selective insect repellents to disrupt olfactory-mediated host-seeking behaviors of insect disease vectors. Odor-evoked OR currents are independent of known G-protein-coupled second messenger pathways.</text>
</comment>
<comment type="similarity">
    <text evidence="6">Belongs to the insect chemoreceptor superfamily. Heteromeric odorant receptor channel (TC 1.A.69) family. Or49a subfamily.</text>
</comment>